<name>TAF4B_MOUSE</name>
<feature type="chain" id="PRO_0000430940" description="Transcription initiation factor TFIID subunit 4B">
    <location>
        <begin position="1"/>
        <end position="850"/>
    </location>
</feature>
<feature type="domain" description="TAFH" evidence="2">
    <location>
        <begin position="256"/>
        <end position="353"/>
    </location>
</feature>
<feature type="domain" description="Histone-fold" evidence="1">
    <location>
        <begin position="642"/>
        <end position="691"/>
    </location>
</feature>
<feature type="region of interest" description="Sufficient for interaction with ZNF628" evidence="6">
    <location>
        <begin position="99"/>
        <end position="240"/>
    </location>
</feature>
<feature type="region of interest" description="Required for interaction with P65/RELA" evidence="1">
    <location>
        <begin position="504"/>
        <end position="526"/>
    </location>
</feature>
<feature type="region of interest" description="Disordered" evidence="3">
    <location>
        <begin position="788"/>
        <end position="812"/>
    </location>
</feature>
<feature type="region of interest" description="Required for interaction with TAF12" evidence="1">
    <location>
        <begin position="818"/>
        <end position="850"/>
    </location>
</feature>
<feature type="short sequence motif" description="Nuclear export signal" evidence="1">
    <location>
        <begin position="509"/>
        <end position="549"/>
    </location>
</feature>
<feature type="compositionally biased region" description="Polar residues" evidence="3">
    <location>
        <begin position="794"/>
        <end position="812"/>
    </location>
</feature>
<feature type="modified residue" description="Phosphoserine" evidence="1">
    <location>
        <position position="584"/>
    </location>
</feature>
<feature type="sequence conflict" description="In Ref. 3; BQ952832." evidence="7" ref="3">
    <original>K</original>
    <variation>Q</variation>
    <location>
        <position position="799"/>
    </location>
</feature>
<feature type="sequence conflict" description="In Ref. 3; BQ952832." evidence="7" ref="3">
    <original>S</original>
    <variation>F</variation>
    <location>
        <position position="808"/>
    </location>
</feature>
<reference key="1">
    <citation type="journal article" date="2009" name="PLoS Biol.">
        <title>Lineage-specific biology revealed by a finished genome assembly of the mouse.</title>
        <authorList>
            <person name="Church D.M."/>
            <person name="Goodstadt L."/>
            <person name="Hillier L.W."/>
            <person name="Zody M.C."/>
            <person name="Goldstein S."/>
            <person name="She X."/>
            <person name="Bult C.J."/>
            <person name="Agarwala R."/>
            <person name="Cherry J.L."/>
            <person name="DiCuccio M."/>
            <person name="Hlavina W."/>
            <person name="Kapustin Y."/>
            <person name="Meric P."/>
            <person name="Maglott D."/>
            <person name="Birtle Z."/>
            <person name="Marques A.C."/>
            <person name="Graves T."/>
            <person name="Zhou S."/>
            <person name="Teague B."/>
            <person name="Potamousis K."/>
            <person name="Churas C."/>
            <person name="Place M."/>
            <person name="Herschleb J."/>
            <person name="Runnheim R."/>
            <person name="Forrest D."/>
            <person name="Amos-Landgraf J."/>
            <person name="Schwartz D.C."/>
            <person name="Cheng Z."/>
            <person name="Lindblad-Toh K."/>
            <person name="Eichler E.E."/>
            <person name="Ponting C.P."/>
        </authorList>
    </citation>
    <scope>NUCLEOTIDE SEQUENCE [LARGE SCALE GENOMIC DNA]</scope>
    <source>
        <strain evidence="8">C57BL/6J</strain>
    </source>
</reference>
<reference key="2">
    <citation type="submission" date="2005-07" db="EMBL/GenBank/DDBJ databases">
        <authorList>
            <person name="Mural R.J."/>
            <person name="Adams M.D."/>
            <person name="Myers E.W."/>
            <person name="Smith H.O."/>
            <person name="Venter J.C."/>
        </authorList>
    </citation>
    <scope>NUCLEOTIDE SEQUENCE [LARGE SCALE GENOMIC DNA]</scope>
</reference>
<reference key="3">
    <citation type="submission" date="2002-08" db="EMBL/GenBank/DDBJ databases">
        <authorList>
            <consortium name="The MGC Project Team"/>
        </authorList>
    </citation>
    <scope>NUCLEOTIDE SEQUENCE [LARGE SCALE MRNA] OF 513-815</scope>
</reference>
<reference key="4">
    <citation type="journal article" date="2001" name="Science">
        <title>Requirement of tissue-selective TBP-associated factor TAFII105 in ovarian development.</title>
        <authorList>
            <person name="Freiman R.N."/>
            <person name="Albright S.R."/>
            <person name="Zheng S."/>
            <person name="Sha W.C."/>
            <person name="Hammer R.E."/>
            <person name="Tjian R."/>
        </authorList>
    </citation>
    <scope>DISRUPTION PHENOTYPE</scope>
    <scope>FUNCTION</scope>
    <scope>TISSUE SPECIFICITY</scope>
</reference>
<reference key="5">
    <citation type="journal article" date="2005" name="Genes Dev.">
        <title>Maintenance of spermatogenesis requires TAF4b, a gonad-specific subunit of TFIID.</title>
        <authorList>
            <person name="Falender A.E."/>
            <person name="Freiman R.N."/>
            <person name="Geles K.G."/>
            <person name="Lo K.C."/>
            <person name="Hwang K."/>
            <person name="Lamb D.J."/>
            <person name="Morris P.L."/>
            <person name="Tjian R."/>
            <person name="Richards J.S."/>
        </authorList>
    </citation>
    <scope>DISRUPTION PHENOTYPE</scope>
    <scope>FUNCTION</scope>
</reference>
<reference key="6">
    <citation type="journal article" date="2020" name="Mol. Cell. Biol.">
        <title>ZFP628 Is a TAF4b-Interacting Transcription Factor Required for Mouse Spermiogenesis.</title>
        <authorList>
            <person name="Gustafson E.A."/>
            <person name="Seymour K.A."/>
            <person name="Sigrist K."/>
            <person name="Rooij D.G.D.E."/>
            <person name="Freiman R.N."/>
        </authorList>
    </citation>
    <scope>INTERACTION WITH ZNF628</scope>
</reference>
<comment type="function">
    <text evidence="1 4 5">Cell type-specific subunit of the general transcription factor TFIID that may function as a gene-selective coactivator in certain cells. TFIID is a multimeric protein complex that plays a central role in mediating promoter responses to various activators asond repressors. TAF4B is a transcriptional coactivator of the p65/RELA NF-kappa-B subunit. Involved in the activation of a subset of antiapoptotic genes including TNFAIP3. Through interaction with OCBA/POU2AF1, acts as a coactivator of B-cell-specific transcription. Plays a role in spermiogenesis and oogenesis.</text>
</comment>
<comment type="subunit">
    <text evidence="1 6">TFIID is composed of TATA binding protein (TBP) and a number of TBP-associated factors (TAFs). Heterodimerizes with TAF12/TFII20 via the C-terminal H2A-like histone-fold domain. This heterodimer forms a histone-like octamer with the TAF6/TAFII70-TAF9/TAFII31 heterodimer. Interacts with P65/RELA homodimers and P65/RELA-REL heterodimers. Interaction with POU2AF1, via its C-terminal activation domain, is required for octamer-dependent transcription (By similarity). Interacts with ZNF628 (PubMed:31932482).</text>
</comment>
<comment type="subcellular location">
    <subcellularLocation>
        <location evidence="1">Nucleus</location>
    </subcellularLocation>
    <subcellularLocation>
        <location evidence="1">Cytoplasm</location>
    </subcellularLocation>
    <text evidence="1">Export into the cytoplasm is mediated by a CRM1-independent nuclear export pathway and not by phosphorylation.</text>
</comment>
<comment type="tissue specificity">
    <text evidence="4">Highly expressed in the testes and ovary, whereas lower levels are detected in most other tissues.</text>
</comment>
<comment type="disruption phenotype">
    <text evidence="4 5">Deficient female mice are infertile due to a granulosa cell defect preventing normal follicle formation. Deficient male are fertile when young, but subsequently exhibit an age-dependent progressive loss of germ cells and misregulation of several genes required for normal spermatogenesis.</text>
</comment>
<comment type="similarity">
    <text evidence="7">Belongs to the TAF4 family.</text>
</comment>
<accession>G5E8Z2</accession>
<protein>
    <recommendedName>
        <fullName>Transcription initiation factor TFIID subunit 4B</fullName>
    </recommendedName>
    <alternativeName>
        <fullName>Transcription initiation factor TFIID 105 kDa subunit</fullName>
        <shortName>TAF(II)105</shortName>
        <shortName>TAFII-105</shortName>
        <shortName>TAFII105</shortName>
    </alternativeName>
</protein>
<organism>
    <name type="scientific">Mus musculus</name>
    <name type="common">Mouse</name>
    <dbReference type="NCBI Taxonomy" id="10090"/>
    <lineage>
        <taxon>Eukaryota</taxon>
        <taxon>Metazoa</taxon>
        <taxon>Chordata</taxon>
        <taxon>Craniata</taxon>
        <taxon>Vertebrata</taxon>
        <taxon>Euteleostomi</taxon>
        <taxon>Mammalia</taxon>
        <taxon>Eutheria</taxon>
        <taxon>Euarchontoglires</taxon>
        <taxon>Glires</taxon>
        <taxon>Rodentia</taxon>
        <taxon>Myomorpha</taxon>
        <taxon>Muroidea</taxon>
        <taxon>Muridae</taxon>
        <taxon>Murinae</taxon>
        <taxon>Mus</taxon>
        <taxon>Mus</taxon>
    </lineage>
</organism>
<evidence type="ECO:0000250" key="1">
    <source>
        <dbReference type="UniProtKB" id="Q92750"/>
    </source>
</evidence>
<evidence type="ECO:0000255" key="2">
    <source>
        <dbReference type="PROSITE-ProRule" id="PRU00440"/>
    </source>
</evidence>
<evidence type="ECO:0000256" key="3">
    <source>
        <dbReference type="SAM" id="MobiDB-lite"/>
    </source>
</evidence>
<evidence type="ECO:0000269" key="4">
    <source>
    </source>
</evidence>
<evidence type="ECO:0000269" key="5">
    <source>
    </source>
</evidence>
<evidence type="ECO:0000269" key="6">
    <source>
    </source>
</evidence>
<evidence type="ECO:0000305" key="7"/>
<evidence type="ECO:0000312" key="8">
    <source>
        <dbReference type="Proteomes" id="UP000000589"/>
    </source>
</evidence>
<proteinExistence type="evidence at protein level"/>
<keyword id="KW-0175">Coiled coil</keyword>
<keyword id="KW-0963">Cytoplasm</keyword>
<keyword id="KW-0221">Differentiation</keyword>
<keyword id="KW-0539">Nucleus</keyword>
<keyword id="KW-0896">Oogenesis</keyword>
<keyword id="KW-0597">Phosphoprotein</keyword>
<keyword id="KW-1185">Reference proteome</keyword>
<keyword id="KW-0744">Spermatogenesis</keyword>
<keyword id="KW-0804">Transcription</keyword>
<keyword id="KW-0805">Transcription regulation</keyword>
<sequence length="850" mass="89528">MPAGLTEPAGAAAPVVSSASGAVTMAPVAALPVRVEGTPVALGPVTKAPVSVCVESVAPQPLPAPVGTLVTKVVPVTALPKLGSPRLPAPQIVTVKTPGTTTIQLPANLQLPPGTVLIKSNSGQLMLVSPQQAVTGAKTTSNITPRPAVPANTQTVKICTVPNSSSQLMKKVTVAPVKNLTQIGTTVATTASSTSSGQPVALPSSVITVTPAKLVNTVSTLKSSSLGVLSTPSNDARLKAETSVAAQTALPPTVLENVKKCKNFLSMLIKLACSGSQSPEMGQNVKRLVEQLLDAEIEAEEFTRKLYIELKSAPQPHLVPFLKKSVVALRQLLPNSQSFIENCVKEVSGDVVISSCTMTTATSPVVTSTVSPVLVSGATAPRTLSVQQTLNPLAGPGVANTGVVTLHSVAPAAATGGTTAATVLLQTSKPLTTSVPNTVAAVSLQPENPVVSGAAVTLAIPSATFGEASATPLCLPSAKPAITSAGTKADKPAIGTPVQIVTQPSTLLPQAAGIPQTAKVKQLVVQQPSGSSVNHVTSISHSSPLSTQNCGQKTPVNAVMPTSSIIKQITLPGNKLLSLQAQRSSIQSNKIKENGPTCFRGEDDINDVTFMAEVNLDEENACILAAHSDFVGTLIQSCKEEPFLVIGALQKRILDIGKKHDITELNSDAVNLISHATQERLRGLLEKLTTIAQHRMTIYKGSENYILSTDTRSQLKFLEKLDQLEKQRKDLEEREMLLKAAKSRSNKEDPEQLRLKQKAKELQQLELAQIQYRDANLTALAAIGPRKKRPLESGNESFKDNPSTSGTSSLTATKPFRPRITRICLRDLIFCMEQEREMKYSRALYLALLK</sequence>
<gene>
    <name type="primary">Taf4b</name>
    <name type="synonym">Taf2c2</name>
    <name type="synonym">Tafii105</name>
</gene>
<dbReference type="EMBL" id="AC102692">
    <property type="status" value="NOT_ANNOTATED_CDS"/>
    <property type="molecule type" value="Genomic_DNA"/>
</dbReference>
<dbReference type="EMBL" id="AC125091">
    <property type="status" value="NOT_ANNOTATED_CDS"/>
    <property type="molecule type" value="Genomic_DNA"/>
</dbReference>
<dbReference type="EMBL" id="AC133172">
    <property type="status" value="NOT_ANNOTATED_CDS"/>
    <property type="molecule type" value="Genomic_DNA"/>
</dbReference>
<dbReference type="EMBL" id="CH466622">
    <property type="protein sequence ID" value="EDL01590.1"/>
    <property type="molecule type" value="Genomic_DNA"/>
</dbReference>
<dbReference type="EMBL" id="BQ952832">
    <property type="status" value="NOT_ANNOTATED_CDS"/>
    <property type="molecule type" value="mRNA"/>
</dbReference>
<dbReference type="CCDS" id="CCDS89195.1"/>
<dbReference type="RefSeq" id="NP_001093919.1">
    <property type="nucleotide sequence ID" value="NM_001100449.1"/>
</dbReference>
<dbReference type="SMR" id="G5E8Z2"/>
<dbReference type="ComplexPortal" id="CPX-959">
    <property type="entry name" value="General transcription factor complex TFIID, Taf4b variant"/>
</dbReference>
<dbReference type="FunCoup" id="G5E8Z2">
    <property type="interactions" value="1556"/>
</dbReference>
<dbReference type="IntAct" id="G5E8Z2">
    <property type="interactions" value="1"/>
</dbReference>
<dbReference type="STRING" id="10090.ENSMUSP00000126909"/>
<dbReference type="GlyGen" id="G5E8Z2">
    <property type="glycosylation" value="5 sites, 1 O-linked glycan (4 sites)"/>
</dbReference>
<dbReference type="iPTMnet" id="G5E8Z2"/>
<dbReference type="PhosphoSitePlus" id="G5E8Z2"/>
<dbReference type="PaxDb" id="10090-ENSMUSP00000126909"/>
<dbReference type="PeptideAtlas" id="G5E8Z2"/>
<dbReference type="ProteomicsDB" id="259352"/>
<dbReference type="Pumba" id="G5E8Z2"/>
<dbReference type="GeneID" id="72504"/>
<dbReference type="KEGG" id="mmu:72504"/>
<dbReference type="UCSC" id="uc008edl.2">
    <property type="organism name" value="mouse"/>
</dbReference>
<dbReference type="AGR" id="MGI:2152345"/>
<dbReference type="CTD" id="6875"/>
<dbReference type="MGI" id="MGI:2152345">
    <property type="gene designation" value="Taf4b"/>
</dbReference>
<dbReference type="eggNOG" id="KOG2341">
    <property type="taxonomic scope" value="Eukaryota"/>
</dbReference>
<dbReference type="HOGENOM" id="CLU_010576_2_0_1"/>
<dbReference type="InParanoid" id="G5E8Z2"/>
<dbReference type="OrthoDB" id="21060at2759"/>
<dbReference type="PhylomeDB" id="G5E8Z2"/>
<dbReference type="TreeFam" id="TF316520"/>
<dbReference type="Reactome" id="R-MMU-674695">
    <property type="pathway name" value="RNA Polymerase II Pre-transcription Events"/>
</dbReference>
<dbReference type="Reactome" id="R-MMU-6804756">
    <property type="pathway name" value="Regulation of TP53 Activity through Phosphorylation"/>
</dbReference>
<dbReference type="Reactome" id="R-MMU-73776">
    <property type="pathway name" value="RNA Polymerase II Promoter Escape"/>
</dbReference>
<dbReference type="Reactome" id="R-MMU-73779">
    <property type="pathway name" value="RNA Polymerase II Transcription Pre-Initiation And Promoter Opening"/>
</dbReference>
<dbReference type="Reactome" id="R-MMU-75953">
    <property type="pathway name" value="RNA Polymerase II Transcription Initiation"/>
</dbReference>
<dbReference type="Reactome" id="R-MMU-76042">
    <property type="pathway name" value="RNA Polymerase II Transcription Initiation And Promoter Clearance"/>
</dbReference>
<dbReference type="BioGRID-ORCS" id="72504">
    <property type="hits" value="1 hit in 76 CRISPR screens"/>
</dbReference>
<dbReference type="PRO" id="PR:G5E8Z2"/>
<dbReference type="Proteomes" id="UP000000589">
    <property type="component" value="Unplaced"/>
</dbReference>
<dbReference type="RNAct" id="G5E8Z2">
    <property type="molecule type" value="protein"/>
</dbReference>
<dbReference type="GO" id="GO:0005737">
    <property type="term" value="C:cytoplasm"/>
    <property type="evidence" value="ECO:0007669"/>
    <property type="project" value="UniProtKB-SubCell"/>
</dbReference>
<dbReference type="GO" id="GO:0005634">
    <property type="term" value="C:nucleus"/>
    <property type="evidence" value="ECO:0000250"/>
    <property type="project" value="ComplexPortal"/>
</dbReference>
<dbReference type="GO" id="GO:0005669">
    <property type="term" value="C:transcription factor TFIID complex"/>
    <property type="evidence" value="ECO:0000250"/>
    <property type="project" value="ComplexPortal"/>
</dbReference>
<dbReference type="GO" id="GO:0005667">
    <property type="term" value="C:transcription regulator complex"/>
    <property type="evidence" value="ECO:0000304"/>
    <property type="project" value="MGI"/>
</dbReference>
<dbReference type="GO" id="GO:0046982">
    <property type="term" value="F:protein heterodimerization activity"/>
    <property type="evidence" value="ECO:0007669"/>
    <property type="project" value="InterPro"/>
</dbReference>
<dbReference type="GO" id="GO:0042789">
    <property type="term" value="P:mRNA transcription by RNA polymerase II"/>
    <property type="evidence" value="ECO:0000250"/>
    <property type="project" value="ComplexPortal"/>
</dbReference>
<dbReference type="GO" id="GO:0048477">
    <property type="term" value="P:oogenesis"/>
    <property type="evidence" value="ECO:0007669"/>
    <property type="project" value="UniProtKB-KW"/>
</dbReference>
<dbReference type="GO" id="GO:2000648">
    <property type="term" value="P:positive regulation of stem cell proliferation"/>
    <property type="evidence" value="ECO:0000315"/>
    <property type="project" value="CACAO"/>
</dbReference>
<dbReference type="GO" id="GO:0060261">
    <property type="term" value="P:positive regulation of transcription initiation by RNA polymerase II"/>
    <property type="evidence" value="ECO:0000250"/>
    <property type="project" value="ComplexPortal"/>
</dbReference>
<dbReference type="GO" id="GO:0006357">
    <property type="term" value="P:regulation of transcription by RNA polymerase II"/>
    <property type="evidence" value="ECO:0000304"/>
    <property type="project" value="MGI"/>
</dbReference>
<dbReference type="GO" id="GO:0051123">
    <property type="term" value="P:RNA polymerase II preinitiation complex assembly"/>
    <property type="evidence" value="ECO:0000250"/>
    <property type="project" value="ComplexPortal"/>
</dbReference>
<dbReference type="GO" id="GO:0007283">
    <property type="term" value="P:spermatogenesis"/>
    <property type="evidence" value="ECO:0007669"/>
    <property type="project" value="UniProtKB-KW"/>
</dbReference>
<dbReference type="GO" id="GO:0006366">
    <property type="term" value="P:transcription by RNA polymerase II"/>
    <property type="evidence" value="ECO:0000304"/>
    <property type="project" value="MGI"/>
</dbReference>
<dbReference type="CDD" id="cd08045">
    <property type="entry name" value="HFD_TAF4"/>
    <property type="match status" value="1"/>
</dbReference>
<dbReference type="FunFam" id="1.10.20.10:FF:000015">
    <property type="entry name" value="Transcription initiation factor TFIID subunit 4B"/>
    <property type="match status" value="1"/>
</dbReference>
<dbReference type="FunFam" id="1.20.120.1110:FF:000002">
    <property type="entry name" value="Transcription initiation factor TFIID subunit 4B"/>
    <property type="match status" value="1"/>
</dbReference>
<dbReference type="Gene3D" id="1.10.20.10">
    <property type="entry name" value="Histone, subunit A"/>
    <property type="match status" value="1"/>
</dbReference>
<dbReference type="Gene3D" id="1.20.120.1110">
    <property type="entry name" value="TAFH/NHR1 domain"/>
    <property type="match status" value="1"/>
</dbReference>
<dbReference type="InterPro" id="IPR009072">
    <property type="entry name" value="Histone-fold"/>
</dbReference>
<dbReference type="InterPro" id="IPR045144">
    <property type="entry name" value="TAF4"/>
</dbReference>
<dbReference type="InterPro" id="IPR007900">
    <property type="entry name" value="TAF4_C"/>
</dbReference>
<dbReference type="InterPro" id="IPR037249">
    <property type="entry name" value="TAFH/NHR1_dom_sf"/>
</dbReference>
<dbReference type="InterPro" id="IPR003894">
    <property type="entry name" value="TAFH_NHR1"/>
</dbReference>
<dbReference type="PANTHER" id="PTHR15138">
    <property type="entry name" value="TRANSCRIPTION INITIATION FACTOR TFIID SUBUNIT 4"/>
    <property type="match status" value="1"/>
</dbReference>
<dbReference type="PANTHER" id="PTHR15138:SF17">
    <property type="entry name" value="TRANSCRIPTION INITIATION FACTOR TFIID SUBUNIT 4B"/>
    <property type="match status" value="1"/>
</dbReference>
<dbReference type="Pfam" id="PF05236">
    <property type="entry name" value="TAF4"/>
    <property type="match status" value="1"/>
</dbReference>
<dbReference type="Pfam" id="PF07531">
    <property type="entry name" value="TAFH"/>
    <property type="match status" value="1"/>
</dbReference>
<dbReference type="SMART" id="SM00549">
    <property type="entry name" value="TAFH"/>
    <property type="match status" value="1"/>
</dbReference>
<dbReference type="SUPFAM" id="SSF47113">
    <property type="entry name" value="Histone-fold"/>
    <property type="match status" value="1"/>
</dbReference>
<dbReference type="SUPFAM" id="SSF158553">
    <property type="entry name" value="TAFH domain-like"/>
    <property type="match status" value="1"/>
</dbReference>
<dbReference type="PROSITE" id="PS51119">
    <property type="entry name" value="TAFH"/>
    <property type="match status" value="1"/>
</dbReference>